<name>Y1409_STAA1</name>
<protein>
    <recommendedName>
        <fullName evidence="1">UPF0346 protein SAHV_1409</fullName>
    </recommendedName>
</protein>
<evidence type="ECO:0000255" key="1">
    <source>
        <dbReference type="HAMAP-Rule" id="MF_01538"/>
    </source>
</evidence>
<comment type="similarity">
    <text evidence="1">Belongs to the UPF0346 family.</text>
</comment>
<dbReference type="EMBL" id="AP009324">
    <property type="protein sequence ID" value="BAF78292.1"/>
    <property type="molecule type" value="Genomic_DNA"/>
</dbReference>
<dbReference type="RefSeq" id="WP_000801007.1">
    <property type="nucleotide sequence ID" value="NZ_CTYB01000059.1"/>
</dbReference>
<dbReference type="SMR" id="A7X2A5"/>
<dbReference type="KEGG" id="saw:SAHV_1409"/>
<dbReference type="HOGENOM" id="CLU_177534_1_0_9"/>
<dbReference type="Gene3D" id="1.10.150.260">
    <property type="entry name" value="YozE SAM-like"/>
    <property type="match status" value="1"/>
</dbReference>
<dbReference type="HAMAP" id="MF_01538">
    <property type="entry name" value="UPF0346"/>
    <property type="match status" value="1"/>
</dbReference>
<dbReference type="InterPro" id="IPR010673">
    <property type="entry name" value="UPF0346"/>
</dbReference>
<dbReference type="InterPro" id="IPR023089">
    <property type="entry name" value="YozE_SAM-like"/>
</dbReference>
<dbReference type="InterPro" id="IPR036806">
    <property type="entry name" value="YozE_SAM-like_sf"/>
</dbReference>
<dbReference type="NCBIfam" id="NF010193">
    <property type="entry name" value="PRK13672.1"/>
    <property type="match status" value="1"/>
</dbReference>
<dbReference type="Pfam" id="PF06855">
    <property type="entry name" value="YozE_SAM_like"/>
    <property type="match status" value="1"/>
</dbReference>
<dbReference type="PIRSF" id="PIRSF037262">
    <property type="entry name" value="UCP037262"/>
    <property type="match status" value="1"/>
</dbReference>
<dbReference type="SUPFAM" id="SSF140652">
    <property type="entry name" value="YozE-like"/>
    <property type="match status" value="1"/>
</dbReference>
<gene>
    <name type="ordered locus">SAHV_1409</name>
</gene>
<accession>A7X2A5</accession>
<sequence length="73" mass="8870">MKNYSFYQFVMTVRGRHDDKGRLAEEIFDDLAFPKHDDDFNILSDYIETHGDFTLPMSVFDDLYEEYTEWLKF</sequence>
<reference key="1">
    <citation type="journal article" date="2008" name="Antimicrob. Agents Chemother.">
        <title>Mutated response regulator graR is responsible for phenotypic conversion of Staphylococcus aureus from heterogeneous vancomycin-intermediate resistance to vancomycin-intermediate resistance.</title>
        <authorList>
            <person name="Neoh H.-M."/>
            <person name="Cui L."/>
            <person name="Yuzawa H."/>
            <person name="Takeuchi F."/>
            <person name="Matsuo M."/>
            <person name="Hiramatsu K."/>
        </authorList>
    </citation>
    <scope>NUCLEOTIDE SEQUENCE [LARGE SCALE GENOMIC DNA]</scope>
    <source>
        <strain>Mu3 / ATCC 700698</strain>
    </source>
</reference>
<proteinExistence type="inferred from homology"/>
<organism>
    <name type="scientific">Staphylococcus aureus (strain Mu3 / ATCC 700698)</name>
    <dbReference type="NCBI Taxonomy" id="418127"/>
    <lineage>
        <taxon>Bacteria</taxon>
        <taxon>Bacillati</taxon>
        <taxon>Bacillota</taxon>
        <taxon>Bacilli</taxon>
        <taxon>Bacillales</taxon>
        <taxon>Staphylococcaceae</taxon>
        <taxon>Staphylococcus</taxon>
    </lineage>
</organism>
<feature type="chain" id="PRO_1000068745" description="UPF0346 protein SAHV_1409">
    <location>
        <begin position="1"/>
        <end position="73"/>
    </location>
</feature>